<organism>
    <name type="scientific">Rhodobacter capsulatus (strain ATCC BAA-309 / NBRC 16581 / SB1003)</name>
    <dbReference type="NCBI Taxonomy" id="272942"/>
    <lineage>
        <taxon>Bacteria</taxon>
        <taxon>Pseudomonadati</taxon>
        <taxon>Pseudomonadota</taxon>
        <taxon>Alphaproteobacteria</taxon>
        <taxon>Rhodobacterales</taxon>
        <taxon>Rhodobacter group</taxon>
        <taxon>Rhodobacter</taxon>
    </lineage>
</organism>
<comment type="function">
    <text>Necessary for photosynthetic and respiratory growth.</text>
</comment>
<evidence type="ECO:0000255" key="1">
    <source>
        <dbReference type="PROSITE-ProRule" id="PRU00345"/>
    </source>
</evidence>
<evidence type="ECO:0000305" key="2"/>
<name>PETP_RHOCB</name>
<feature type="chain" id="PRO_0000054378" description="HTH-type transcriptional regulator PetP">
    <location>
        <begin position="1"/>
        <end position="166"/>
    </location>
</feature>
<feature type="domain" description="HTH marR-type" evidence="1">
    <location>
        <begin position="17"/>
        <end position="152"/>
    </location>
</feature>
<feature type="DNA-binding region" description="H-T-H motif" evidence="1">
    <location>
        <begin position="66"/>
        <end position="89"/>
    </location>
</feature>
<feature type="sequence conflict" description="In Ref. 1; CAA78097." evidence="2" ref="1">
    <original>R</original>
    <variation>P</variation>
    <location>
        <position position="129"/>
    </location>
</feature>
<accession>P31078</accession>
<accession>D5ANZ0</accession>
<gene>
    <name type="primary">petP</name>
    <name type="ordered locus">RCAP_rcc02766</name>
</gene>
<protein>
    <recommendedName>
        <fullName>HTH-type transcriptional regulator PetP</fullName>
    </recommendedName>
</protein>
<reference key="1">
    <citation type="journal article" date="1992" name="Mol. Microbiol.">
        <title>petR, located upstream of the fbcFBC operon encoding the cytochrome bc1 complex, is homologous to bacterial response regulators and necessary for photosynthetic and respiratory growth of Rhodobacter capsulatus.</title>
        <authorList>
            <person name="Tokito M.K."/>
            <person name="Daldal F."/>
        </authorList>
    </citation>
    <scope>NUCLEOTIDE SEQUENCE [GENOMIC DNA]</scope>
    <source>
        <strain>MT1131</strain>
    </source>
</reference>
<reference key="2">
    <citation type="journal article" date="2010" name="J. Bacteriol.">
        <title>Complete genome sequence of the photosynthetic purple nonsulfur bacterium Rhodobacter capsulatus SB 1003.</title>
        <authorList>
            <person name="Strnad H."/>
            <person name="Lapidus A."/>
            <person name="Paces J."/>
            <person name="Ulbrich P."/>
            <person name="Vlcek C."/>
            <person name="Paces V."/>
            <person name="Haselkorn R."/>
        </authorList>
    </citation>
    <scope>NUCLEOTIDE SEQUENCE [LARGE SCALE GENOMIC DNA]</scope>
    <source>
        <strain>ATCC BAA-309 / NBRC 16581 / SB1003</strain>
    </source>
</reference>
<keyword id="KW-0238">DNA-binding</keyword>
<keyword id="KW-1185">Reference proteome</keyword>
<keyword id="KW-0804">Transcription</keyword>
<keyword id="KW-0805">Transcription regulation</keyword>
<sequence length="166" mass="18867">MADTGAPGGETLLFLTDEQLRKGIEAMFFAYRGFTADPDRILDQHDYGRAHHRAIHFINREPGLTVTTLISVLGVTKQSLNRVLRTLIDDGLVESRVGRRDKRERHLHLTEKGAVLERELSEAQRVRMRAAYRAAGPQAVAGFRQVLEAMMDPAMRRHYQMLKDAE</sequence>
<dbReference type="EMBL" id="Z12113">
    <property type="protein sequence ID" value="CAA78097.1"/>
    <property type="molecule type" value="Genomic_DNA"/>
</dbReference>
<dbReference type="EMBL" id="CP001312">
    <property type="protein sequence ID" value="ADE86495.1"/>
    <property type="molecule type" value="Genomic_DNA"/>
</dbReference>
<dbReference type="PIR" id="S22631">
    <property type="entry name" value="S22631"/>
</dbReference>
<dbReference type="RefSeq" id="WP_013068473.1">
    <property type="nucleotide sequence ID" value="NC_014034.1"/>
</dbReference>
<dbReference type="SMR" id="P31078"/>
<dbReference type="STRING" id="272942.RCAP_rcc02766"/>
<dbReference type="GeneID" id="31491584"/>
<dbReference type="KEGG" id="rcp:RCAP_rcc02766"/>
<dbReference type="eggNOG" id="COG1846">
    <property type="taxonomic scope" value="Bacteria"/>
</dbReference>
<dbReference type="HOGENOM" id="CLU_102087_1_0_5"/>
<dbReference type="OrthoDB" id="9799368at2"/>
<dbReference type="Proteomes" id="UP000002361">
    <property type="component" value="Chromosome"/>
</dbReference>
<dbReference type="GO" id="GO:0003677">
    <property type="term" value="F:DNA binding"/>
    <property type="evidence" value="ECO:0007669"/>
    <property type="project" value="UniProtKB-KW"/>
</dbReference>
<dbReference type="GO" id="GO:0003700">
    <property type="term" value="F:DNA-binding transcription factor activity"/>
    <property type="evidence" value="ECO:0007669"/>
    <property type="project" value="InterPro"/>
</dbReference>
<dbReference type="GO" id="GO:0006950">
    <property type="term" value="P:response to stress"/>
    <property type="evidence" value="ECO:0007669"/>
    <property type="project" value="TreeGrafter"/>
</dbReference>
<dbReference type="Gene3D" id="1.10.10.10">
    <property type="entry name" value="Winged helix-like DNA-binding domain superfamily/Winged helix DNA-binding domain"/>
    <property type="match status" value="1"/>
</dbReference>
<dbReference type="InterPro" id="IPR000835">
    <property type="entry name" value="HTH_MarR-typ"/>
</dbReference>
<dbReference type="InterPro" id="IPR039422">
    <property type="entry name" value="MarR/SlyA-like"/>
</dbReference>
<dbReference type="InterPro" id="IPR023187">
    <property type="entry name" value="Tscrpt_reg_MarR-type_CS"/>
</dbReference>
<dbReference type="InterPro" id="IPR036388">
    <property type="entry name" value="WH-like_DNA-bd_sf"/>
</dbReference>
<dbReference type="InterPro" id="IPR036390">
    <property type="entry name" value="WH_DNA-bd_sf"/>
</dbReference>
<dbReference type="PANTHER" id="PTHR33164">
    <property type="entry name" value="TRANSCRIPTIONAL REGULATOR, MARR FAMILY"/>
    <property type="match status" value="1"/>
</dbReference>
<dbReference type="PANTHER" id="PTHR33164:SF44">
    <property type="entry name" value="TRANSCRIPTIONAL REGULATORY PROTEIN"/>
    <property type="match status" value="1"/>
</dbReference>
<dbReference type="Pfam" id="PF12802">
    <property type="entry name" value="MarR_2"/>
    <property type="match status" value="1"/>
</dbReference>
<dbReference type="SMART" id="SM00347">
    <property type="entry name" value="HTH_MARR"/>
    <property type="match status" value="1"/>
</dbReference>
<dbReference type="SUPFAM" id="SSF46785">
    <property type="entry name" value="Winged helix' DNA-binding domain"/>
    <property type="match status" value="1"/>
</dbReference>
<dbReference type="PROSITE" id="PS01117">
    <property type="entry name" value="HTH_MARR_1"/>
    <property type="match status" value="1"/>
</dbReference>
<dbReference type="PROSITE" id="PS50995">
    <property type="entry name" value="HTH_MARR_2"/>
    <property type="match status" value="1"/>
</dbReference>
<proteinExistence type="predicted"/>